<keyword id="KW-0002">3D-structure</keyword>
<keyword id="KW-0007">Acetylation</keyword>
<keyword id="KW-0963">Cytoplasm</keyword>
<keyword id="KW-0413">Isomerase</keyword>
<keyword id="KW-0472">Membrane</keyword>
<keyword id="KW-1185">Reference proteome</keyword>
<keyword id="KW-0697">Rotamase</keyword>
<keyword id="KW-0703">Sarcoplasmic reticulum</keyword>
<dbReference type="EC" id="5.2.1.8" evidence="2"/>
<dbReference type="EMBL" id="X60203">
    <property type="protein sequence ID" value="CAA42762.1"/>
    <property type="molecule type" value="mRNA"/>
</dbReference>
<dbReference type="EMBL" id="U65100">
    <property type="protein sequence ID" value="AAB17554.1"/>
    <property type="molecule type" value="Genomic_DNA"/>
</dbReference>
<dbReference type="EMBL" id="U65098">
    <property type="protein sequence ID" value="AAB17554.1"/>
    <property type="status" value="JOINED"/>
    <property type="molecule type" value="Genomic_DNA"/>
</dbReference>
<dbReference type="EMBL" id="U65099">
    <property type="protein sequence ID" value="AAB17554.1"/>
    <property type="status" value="JOINED"/>
    <property type="molecule type" value="Genomic_DNA"/>
</dbReference>
<dbReference type="EMBL" id="AF483488">
    <property type="protein sequence ID" value="AAL90762.1"/>
    <property type="molecule type" value="mRNA"/>
</dbReference>
<dbReference type="EMBL" id="AF483489">
    <property type="protein sequence ID" value="AAL90763.1"/>
    <property type="molecule type" value="mRNA"/>
</dbReference>
<dbReference type="EMBL" id="AK002777">
    <property type="protein sequence ID" value="BAB22351.1"/>
    <property type="molecule type" value="mRNA"/>
</dbReference>
<dbReference type="EMBL" id="AK010693">
    <property type="protein sequence ID" value="BAB27125.1"/>
    <property type="molecule type" value="mRNA"/>
</dbReference>
<dbReference type="EMBL" id="AK019362">
    <property type="protein sequence ID" value="BAB31680.1"/>
    <property type="molecule type" value="mRNA"/>
</dbReference>
<dbReference type="EMBL" id="AK154751">
    <property type="protein sequence ID" value="BAE32804.1"/>
    <property type="molecule type" value="mRNA"/>
</dbReference>
<dbReference type="EMBL" id="AK168333">
    <property type="protein sequence ID" value="BAE40271.1"/>
    <property type="molecule type" value="mRNA"/>
</dbReference>
<dbReference type="EMBL" id="AK169186">
    <property type="protein sequence ID" value="BAE40963.1"/>
    <property type="molecule type" value="mRNA"/>
</dbReference>
<dbReference type="EMBL" id="AK169242">
    <property type="protein sequence ID" value="BAE41008.1"/>
    <property type="molecule type" value="mRNA"/>
</dbReference>
<dbReference type="EMBL" id="BC004671">
    <property type="protein sequence ID" value="AAH04671.1"/>
    <property type="molecule type" value="mRNA"/>
</dbReference>
<dbReference type="CCDS" id="CCDS16869.1"/>
<dbReference type="PIR" id="JH0528">
    <property type="entry name" value="JH0528"/>
</dbReference>
<dbReference type="RefSeq" id="NP_001289006.1">
    <property type="nucleotide sequence ID" value="NM_001302077.1"/>
</dbReference>
<dbReference type="RefSeq" id="NP_001289007.1">
    <property type="nucleotide sequence ID" value="NM_001302078.1"/>
</dbReference>
<dbReference type="RefSeq" id="NP_001289008.1">
    <property type="nucleotide sequence ID" value="NM_001302079.1"/>
</dbReference>
<dbReference type="RefSeq" id="NP_001289009.1">
    <property type="nucleotide sequence ID" value="NM_001302080.1"/>
</dbReference>
<dbReference type="RefSeq" id="NP_032045.1">
    <property type="nucleotide sequence ID" value="NM_008019.3"/>
</dbReference>
<dbReference type="PDB" id="8VJJ">
    <property type="method" value="EM"/>
    <property type="resolution" value="2.53 A"/>
    <property type="chains" value="E/F/G/H=1-108"/>
</dbReference>
<dbReference type="PDB" id="8VJK">
    <property type="method" value="EM"/>
    <property type="resolution" value="2.92 A"/>
    <property type="chains" value="E/F/G/H=1-108"/>
</dbReference>
<dbReference type="PDB" id="8VK3">
    <property type="method" value="EM"/>
    <property type="resolution" value="3.21 A"/>
    <property type="chains" value="E/F/G/H=1-108"/>
</dbReference>
<dbReference type="PDB" id="8VK4">
    <property type="method" value="EM"/>
    <property type="resolution" value="3.56 A"/>
    <property type="chains" value="E/F/G/H=1-108"/>
</dbReference>
<dbReference type="PDBsum" id="8VJJ"/>
<dbReference type="PDBsum" id="8VJK"/>
<dbReference type="PDBsum" id="8VK3"/>
<dbReference type="PDBsum" id="8VK4"/>
<dbReference type="BMRB" id="P26883"/>
<dbReference type="EMDB" id="EMD-43283"/>
<dbReference type="EMDB" id="EMD-43284"/>
<dbReference type="EMDB" id="EMD-43299"/>
<dbReference type="EMDB" id="EMD-43304"/>
<dbReference type="SMR" id="P26883"/>
<dbReference type="BioGRID" id="199682">
    <property type="interactions" value="7"/>
</dbReference>
<dbReference type="DIP" id="DIP-29707N"/>
<dbReference type="FunCoup" id="P26883">
    <property type="interactions" value="2639"/>
</dbReference>
<dbReference type="IntAct" id="P26883">
    <property type="interactions" value="5"/>
</dbReference>
<dbReference type="MINT" id="P26883"/>
<dbReference type="STRING" id="10090.ENSMUSP00000037206"/>
<dbReference type="ChEMBL" id="CHEMBL4295736"/>
<dbReference type="DrugCentral" id="P26883"/>
<dbReference type="GlyGen" id="P26883">
    <property type="glycosylation" value="1 site, 1 O-linked glycan (1 site)"/>
</dbReference>
<dbReference type="iPTMnet" id="P26883"/>
<dbReference type="PhosphoSitePlus" id="P26883"/>
<dbReference type="SwissPalm" id="P26883"/>
<dbReference type="jPOST" id="P26883"/>
<dbReference type="PaxDb" id="10090-ENSMUSP00000037206"/>
<dbReference type="PeptideAtlas" id="P26883"/>
<dbReference type="ProteomicsDB" id="271770"/>
<dbReference type="Pumba" id="P26883"/>
<dbReference type="DNASU" id="14225"/>
<dbReference type="Ensembl" id="ENSMUST00000044011.12">
    <property type="protein sequence ID" value="ENSMUSP00000037206.6"/>
    <property type="gene ID" value="ENSMUSG00000032966.15"/>
</dbReference>
<dbReference type="GeneID" id="14225"/>
<dbReference type="KEGG" id="mmu:14225"/>
<dbReference type="UCSC" id="uc008ndy.2">
    <property type="organism name" value="mouse"/>
</dbReference>
<dbReference type="AGR" id="MGI:95541"/>
<dbReference type="CTD" id="2280"/>
<dbReference type="MGI" id="MGI:95541">
    <property type="gene designation" value="Fkbp1a"/>
</dbReference>
<dbReference type="VEuPathDB" id="HostDB:ENSMUSG00000032966"/>
<dbReference type="eggNOG" id="KOG0544">
    <property type="taxonomic scope" value="Eukaryota"/>
</dbReference>
<dbReference type="GeneTree" id="ENSGT00940000153311"/>
<dbReference type="HOGENOM" id="CLU_013615_12_1_1"/>
<dbReference type="InParanoid" id="P26883"/>
<dbReference type="OMA" id="FTSMNNQ"/>
<dbReference type="TreeFam" id="TF105291"/>
<dbReference type="Reactome" id="R-MMU-166208">
    <property type="pathway name" value="mTORC1-mediated signalling"/>
</dbReference>
<dbReference type="Reactome" id="R-MMU-2025928">
    <property type="pathway name" value="Calcineurin activates NFAT"/>
</dbReference>
<dbReference type="Reactome" id="R-MMU-2173789">
    <property type="pathway name" value="TGF-beta receptor signaling activates SMADs"/>
</dbReference>
<dbReference type="BioGRID-ORCS" id="14225">
    <property type="hits" value="13 hits in 80 CRISPR screens"/>
</dbReference>
<dbReference type="ChiTaRS" id="Fkbp1a">
    <property type="organism name" value="mouse"/>
</dbReference>
<dbReference type="PRO" id="PR:P26883"/>
<dbReference type="Proteomes" id="UP000000589">
    <property type="component" value="Chromosome 2"/>
</dbReference>
<dbReference type="RNAct" id="P26883">
    <property type="molecule type" value="protein"/>
</dbReference>
<dbReference type="Bgee" id="ENSMUSG00000032966">
    <property type="expression patterns" value="Expressed in lateral septal nucleus and 275 other cell types or tissues"/>
</dbReference>
<dbReference type="ExpressionAtlas" id="P26883">
    <property type="expression patterns" value="baseline and differential"/>
</dbReference>
<dbReference type="GO" id="GO:0098562">
    <property type="term" value="C:cytoplasmic side of membrane"/>
    <property type="evidence" value="ECO:0000250"/>
    <property type="project" value="UniProtKB"/>
</dbReference>
<dbReference type="GO" id="GO:0005829">
    <property type="term" value="C:cytosol"/>
    <property type="evidence" value="ECO:0007669"/>
    <property type="project" value="UniProtKB-SubCell"/>
</dbReference>
<dbReference type="GO" id="GO:0016020">
    <property type="term" value="C:membrane"/>
    <property type="evidence" value="ECO:0000314"/>
    <property type="project" value="MGI"/>
</dbReference>
<dbReference type="GO" id="GO:1990425">
    <property type="term" value="C:ryanodine receptor complex"/>
    <property type="evidence" value="ECO:0000250"/>
    <property type="project" value="UniProtKB"/>
</dbReference>
<dbReference type="GO" id="GO:0016529">
    <property type="term" value="C:sarcoplasmic reticulum"/>
    <property type="evidence" value="ECO:0000250"/>
    <property type="project" value="UniProtKB"/>
</dbReference>
<dbReference type="GO" id="GO:0033017">
    <property type="term" value="C:sarcoplasmic reticulum membrane"/>
    <property type="evidence" value="ECO:0000314"/>
    <property type="project" value="MGI"/>
</dbReference>
<dbReference type="GO" id="GO:0045202">
    <property type="term" value="C:synapse"/>
    <property type="evidence" value="ECO:0000314"/>
    <property type="project" value="SynGO"/>
</dbReference>
<dbReference type="GO" id="GO:0005528">
    <property type="term" value="F:FK506 binding"/>
    <property type="evidence" value="ECO:0000314"/>
    <property type="project" value="MGI"/>
</dbReference>
<dbReference type="GO" id="GO:0042802">
    <property type="term" value="F:identical protein binding"/>
    <property type="evidence" value="ECO:0000353"/>
    <property type="project" value="MGI"/>
</dbReference>
<dbReference type="GO" id="GO:0003755">
    <property type="term" value="F:peptidyl-prolyl cis-trans isomerase activity"/>
    <property type="evidence" value="ECO:0007669"/>
    <property type="project" value="UniProtKB-KW"/>
</dbReference>
<dbReference type="GO" id="GO:0044325">
    <property type="term" value="F:transmembrane transporter binding"/>
    <property type="evidence" value="ECO:0000353"/>
    <property type="project" value="BHF-UCL"/>
</dbReference>
<dbReference type="GO" id="GO:0019221">
    <property type="term" value="P:cytokine-mediated signaling pathway"/>
    <property type="evidence" value="ECO:0000315"/>
    <property type="project" value="MGI"/>
</dbReference>
<dbReference type="GO" id="GO:0003007">
    <property type="term" value="P:heart morphogenesis"/>
    <property type="evidence" value="ECO:0000315"/>
    <property type="project" value="BHF-UCL"/>
</dbReference>
<dbReference type="GO" id="GO:0060347">
    <property type="term" value="P:heart trabecula formation"/>
    <property type="evidence" value="ECO:0000315"/>
    <property type="project" value="BHF-UCL"/>
</dbReference>
<dbReference type="GO" id="GO:0006936">
    <property type="term" value="P:muscle contraction"/>
    <property type="evidence" value="ECO:0000315"/>
    <property type="project" value="MGI"/>
</dbReference>
<dbReference type="GO" id="GO:0060314">
    <property type="term" value="P:regulation of ryanodine-sensitive calcium-release channel activity"/>
    <property type="evidence" value="ECO:0000315"/>
    <property type="project" value="BHF-UCL"/>
</dbReference>
<dbReference type="GO" id="GO:0051209">
    <property type="term" value="P:release of sequestered calcium ion into cytosol"/>
    <property type="evidence" value="ECO:0000314"/>
    <property type="project" value="MGI"/>
</dbReference>
<dbReference type="GO" id="GO:0031000">
    <property type="term" value="P:response to caffeine"/>
    <property type="evidence" value="ECO:0000315"/>
    <property type="project" value="MGI"/>
</dbReference>
<dbReference type="GO" id="GO:0042098">
    <property type="term" value="P:T cell proliferation"/>
    <property type="evidence" value="ECO:0000315"/>
    <property type="project" value="MGI"/>
</dbReference>
<dbReference type="GO" id="GO:0055010">
    <property type="term" value="P:ventricular cardiac muscle tissue morphogenesis"/>
    <property type="evidence" value="ECO:0000315"/>
    <property type="project" value="BHF-UCL"/>
</dbReference>
<dbReference type="FunFam" id="3.10.50.40:FF:000024">
    <property type="entry name" value="Peptidyl-prolyl cis-trans isomerase FKBP1A"/>
    <property type="match status" value="1"/>
</dbReference>
<dbReference type="Gene3D" id="3.10.50.40">
    <property type="match status" value="1"/>
</dbReference>
<dbReference type="InterPro" id="IPR050689">
    <property type="entry name" value="FKBP-type_PPIase"/>
</dbReference>
<dbReference type="InterPro" id="IPR046357">
    <property type="entry name" value="PPIase_dom_sf"/>
</dbReference>
<dbReference type="InterPro" id="IPR001179">
    <property type="entry name" value="PPIase_FKBP_dom"/>
</dbReference>
<dbReference type="PANTHER" id="PTHR10516">
    <property type="entry name" value="PEPTIDYL-PROLYL CIS-TRANS ISOMERASE"/>
    <property type="match status" value="1"/>
</dbReference>
<dbReference type="PANTHER" id="PTHR10516:SF301">
    <property type="entry name" value="PEPTIDYL-PROLYL CIS-TRANS ISOMERASE FKBP1A-RELATED"/>
    <property type="match status" value="1"/>
</dbReference>
<dbReference type="Pfam" id="PF00254">
    <property type="entry name" value="FKBP_C"/>
    <property type="match status" value="1"/>
</dbReference>
<dbReference type="SUPFAM" id="SSF54534">
    <property type="entry name" value="FKBP-like"/>
    <property type="match status" value="1"/>
</dbReference>
<dbReference type="PROSITE" id="PS50059">
    <property type="entry name" value="FKBP_PPIASE"/>
    <property type="match status" value="1"/>
</dbReference>
<proteinExistence type="evidence at protein level"/>
<evidence type="ECO:0000250" key="1"/>
<evidence type="ECO:0000250" key="2">
    <source>
        <dbReference type="UniProtKB" id="P62942"/>
    </source>
</evidence>
<evidence type="ECO:0000250" key="3">
    <source>
        <dbReference type="UniProtKB" id="P62943"/>
    </source>
</evidence>
<evidence type="ECO:0000250" key="4">
    <source>
        <dbReference type="UniProtKB" id="Q62658"/>
    </source>
</evidence>
<evidence type="ECO:0000255" key="5">
    <source>
        <dbReference type="PROSITE-ProRule" id="PRU00277"/>
    </source>
</evidence>
<evidence type="ECO:0000269" key="6">
    <source>
    </source>
</evidence>
<evidence type="ECO:0000305" key="7"/>
<evidence type="ECO:0007744" key="8">
    <source>
    </source>
</evidence>
<comment type="function">
    <text evidence="1">Keeps in an inactive conformation TGFBR1, the TGF-beta type I serine/threonine kinase receptor, preventing TGF-beta receptor activation in absence of ligand. Recruits SMAD7 to ACVR1B which prevents the association of SMAD2 and SMAD3 with the activin receptor complex, thereby blocking the activin signal. May modulate the RYR1 calcium channel activity. PPIases accelerate the folding of proteins. It catalyzes the cis-trans isomerization of proline imidic peptide bonds in oligopeptides (By similarity).</text>
</comment>
<comment type="catalytic activity">
    <reaction evidence="2">
        <text>[protein]-peptidylproline (omega=180) = [protein]-peptidylproline (omega=0)</text>
        <dbReference type="Rhea" id="RHEA:16237"/>
        <dbReference type="Rhea" id="RHEA-COMP:10747"/>
        <dbReference type="Rhea" id="RHEA-COMP:10748"/>
        <dbReference type="ChEBI" id="CHEBI:83833"/>
        <dbReference type="ChEBI" id="CHEBI:83834"/>
        <dbReference type="EC" id="5.2.1.8"/>
    </reaction>
</comment>
<comment type="activity regulation">
    <text>Inhibited by both FK506 and rapamycin.</text>
</comment>
<comment type="subunit">
    <text evidence="2 3 4 6">Interacts with TGFBR1; prevents TGFBR1 phosphorylation by TGFBR2 and stabilizes it in the inactive conformation (By similarity). Interacts with ACVR1B and SMAD7 (By similarity). Identified in a complex composed of RYR1, PDE4D, PKA, FKBP1A and protein phosphatase 1 (PP1) (PubMed:18268335). Interacts directly with RYR2 and RYR3 (By similarity). Interacts directly with RYR1 (By similarity). Interacts with GLMN; rapamycin and FK506 abolish the interaction with GLMN in a dose dependent manner (By similarity).</text>
</comment>
<comment type="interaction">
    <interactant intactId="EBI-6379901">
        <id>P26883</id>
    </interactant>
    <interactant intactId="EBI-642079">
        <id>E9PZQ0</id>
        <label>Ryr1</label>
    </interactant>
    <organismsDiffer>false</organismsDiffer>
    <experiments>2</experiments>
</comment>
<comment type="subcellular location">
    <subcellularLocation>
        <location evidence="2">Cytoplasm</location>
        <location evidence="2">Cytosol</location>
    </subcellularLocation>
    <subcellularLocation>
        <location evidence="3">Sarcoplasmic reticulum membrane</location>
        <topology evidence="3">Peripheral membrane protein</topology>
        <orientation evidence="3">Cytoplasmic side</orientation>
    </subcellularLocation>
</comment>
<comment type="similarity">
    <text evidence="7">Belongs to the FKBP-type PPIase family. FKBP1 subfamily.</text>
</comment>
<gene>
    <name type="primary">Fkbp1a</name>
    <name type="synonym">Fkbp1</name>
</gene>
<name>FKB1A_MOUSE</name>
<feature type="chain" id="PRO_0000075290" description="Peptidyl-prolyl cis-trans isomerase FKBP1A">
    <location>
        <begin position="1"/>
        <end position="108"/>
    </location>
</feature>
<feature type="domain" description="PPIase FKBP-type" evidence="5">
    <location>
        <begin position="20"/>
        <end position="108"/>
    </location>
</feature>
<feature type="modified residue" description="N6-acetyllysine; alternate" evidence="8">
    <location>
        <position position="53"/>
    </location>
</feature>
<feature type="modified residue" description="N6-succinyllysine; alternate" evidence="8">
    <location>
        <position position="53"/>
    </location>
</feature>
<reference key="1">
    <citation type="journal article" date="1991" name="Gene">
        <title>cDNA encoding murine FK506-binding protein (FKBP): nucleotide and deduced amino acid sequence.</title>
        <authorList>
            <person name="Nelson P.A."/>
            <person name="Lippke J.A."/>
            <person name="Murcko M.A."/>
            <person name="Rosborough S.L."/>
            <person name="Peattie D.A."/>
        </authorList>
    </citation>
    <scope>NUCLEOTIDE SEQUENCE [MRNA]</scope>
    <source>
        <strain>C57BL/6 X CBA</strain>
    </source>
</reference>
<reference key="2">
    <citation type="submission" date="1996-10" db="EMBL/GenBank/DDBJ databases">
        <authorList>
            <person name="Shou W."/>
            <person name="Bao S."/>
            <person name="Mathews L.S."/>
            <person name="Matzuk M.M."/>
        </authorList>
    </citation>
    <scope>NUCLEOTIDE SEQUENCE</scope>
    <source>
        <strain>129/Sv</strain>
    </source>
</reference>
<reference key="3">
    <citation type="journal article" date="2001" name="Mamm. Genome">
        <title>High-throughput sequence identification of gene coding variants within alcohol-related QTLs.</title>
        <authorList>
            <person name="Ehringer M.A."/>
            <person name="Thompson J."/>
            <person name="Conroy O."/>
            <person name="Xu Y."/>
            <person name="Yang F."/>
            <person name="Canniff J."/>
            <person name="Beeson M."/>
            <person name="Gordon L."/>
            <person name="Bennett B."/>
            <person name="Johnson T.E."/>
            <person name="Sikela J.M."/>
        </authorList>
    </citation>
    <scope>NUCLEOTIDE SEQUENCE</scope>
    <source>
        <strain>ILS</strain>
        <strain>ISS</strain>
    </source>
</reference>
<reference key="4">
    <citation type="journal article" date="2005" name="Science">
        <title>The transcriptional landscape of the mammalian genome.</title>
        <authorList>
            <person name="Carninci P."/>
            <person name="Kasukawa T."/>
            <person name="Katayama S."/>
            <person name="Gough J."/>
            <person name="Frith M.C."/>
            <person name="Maeda N."/>
            <person name="Oyama R."/>
            <person name="Ravasi T."/>
            <person name="Lenhard B."/>
            <person name="Wells C."/>
            <person name="Kodzius R."/>
            <person name="Shimokawa K."/>
            <person name="Bajic V.B."/>
            <person name="Brenner S.E."/>
            <person name="Batalov S."/>
            <person name="Forrest A.R."/>
            <person name="Zavolan M."/>
            <person name="Davis M.J."/>
            <person name="Wilming L.G."/>
            <person name="Aidinis V."/>
            <person name="Allen J.E."/>
            <person name="Ambesi-Impiombato A."/>
            <person name="Apweiler R."/>
            <person name="Aturaliya R.N."/>
            <person name="Bailey T.L."/>
            <person name="Bansal M."/>
            <person name="Baxter L."/>
            <person name="Beisel K.W."/>
            <person name="Bersano T."/>
            <person name="Bono H."/>
            <person name="Chalk A.M."/>
            <person name="Chiu K.P."/>
            <person name="Choudhary V."/>
            <person name="Christoffels A."/>
            <person name="Clutterbuck D.R."/>
            <person name="Crowe M.L."/>
            <person name="Dalla E."/>
            <person name="Dalrymple B.P."/>
            <person name="de Bono B."/>
            <person name="Della Gatta G."/>
            <person name="di Bernardo D."/>
            <person name="Down T."/>
            <person name="Engstrom P."/>
            <person name="Fagiolini M."/>
            <person name="Faulkner G."/>
            <person name="Fletcher C.F."/>
            <person name="Fukushima T."/>
            <person name="Furuno M."/>
            <person name="Futaki S."/>
            <person name="Gariboldi M."/>
            <person name="Georgii-Hemming P."/>
            <person name="Gingeras T.R."/>
            <person name="Gojobori T."/>
            <person name="Green R.E."/>
            <person name="Gustincich S."/>
            <person name="Harbers M."/>
            <person name="Hayashi Y."/>
            <person name="Hensch T.K."/>
            <person name="Hirokawa N."/>
            <person name="Hill D."/>
            <person name="Huminiecki L."/>
            <person name="Iacono M."/>
            <person name="Ikeo K."/>
            <person name="Iwama A."/>
            <person name="Ishikawa T."/>
            <person name="Jakt M."/>
            <person name="Kanapin A."/>
            <person name="Katoh M."/>
            <person name="Kawasawa Y."/>
            <person name="Kelso J."/>
            <person name="Kitamura H."/>
            <person name="Kitano H."/>
            <person name="Kollias G."/>
            <person name="Krishnan S.P."/>
            <person name="Kruger A."/>
            <person name="Kummerfeld S.K."/>
            <person name="Kurochkin I.V."/>
            <person name="Lareau L.F."/>
            <person name="Lazarevic D."/>
            <person name="Lipovich L."/>
            <person name="Liu J."/>
            <person name="Liuni S."/>
            <person name="McWilliam S."/>
            <person name="Madan Babu M."/>
            <person name="Madera M."/>
            <person name="Marchionni L."/>
            <person name="Matsuda H."/>
            <person name="Matsuzawa S."/>
            <person name="Miki H."/>
            <person name="Mignone F."/>
            <person name="Miyake S."/>
            <person name="Morris K."/>
            <person name="Mottagui-Tabar S."/>
            <person name="Mulder N."/>
            <person name="Nakano N."/>
            <person name="Nakauchi H."/>
            <person name="Ng P."/>
            <person name="Nilsson R."/>
            <person name="Nishiguchi S."/>
            <person name="Nishikawa S."/>
            <person name="Nori F."/>
            <person name="Ohara O."/>
            <person name="Okazaki Y."/>
            <person name="Orlando V."/>
            <person name="Pang K.C."/>
            <person name="Pavan W.J."/>
            <person name="Pavesi G."/>
            <person name="Pesole G."/>
            <person name="Petrovsky N."/>
            <person name="Piazza S."/>
            <person name="Reed J."/>
            <person name="Reid J.F."/>
            <person name="Ring B.Z."/>
            <person name="Ringwald M."/>
            <person name="Rost B."/>
            <person name="Ruan Y."/>
            <person name="Salzberg S.L."/>
            <person name="Sandelin A."/>
            <person name="Schneider C."/>
            <person name="Schoenbach C."/>
            <person name="Sekiguchi K."/>
            <person name="Semple C.A."/>
            <person name="Seno S."/>
            <person name="Sessa L."/>
            <person name="Sheng Y."/>
            <person name="Shibata Y."/>
            <person name="Shimada H."/>
            <person name="Shimada K."/>
            <person name="Silva D."/>
            <person name="Sinclair B."/>
            <person name="Sperling S."/>
            <person name="Stupka E."/>
            <person name="Sugiura K."/>
            <person name="Sultana R."/>
            <person name="Takenaka Y."/>
            <person name="Taki K."/>
            <person name="Tammoja K."/>
            <person name="Tan S.L."/>
            <person name="Tang S."/>
            <person name="Taylor M.S."/>
            <person name="Tegner J."/>
            <person name="Teichmann S.A."/>
            <person name="Ueda H.R."/>
            <person name="van Nimwegen E."/>
            <person name="Verardo R."/>
            <person name="Wei C.L."/>
            <person name="Yagi K."/>
            <person name="Yamanishi H."/>
            <person name="Zabarovsky E."/>
            <person name="Zhu S."/>
            <person name="Zimmer A."/>
            <person name="Hide W."/>
            <person name="Bult C."/>
            <person name="Grimmond S.M."/>
            <person name="Teasdale R.D."/>
            <person name="Liu E.T."/>
            <person name="Brusic V."/>
            <person name="Quackenbush J."/>
            <person name="Wahlestedt C."/>
            <person name="Mattick J.S."/>
            <person name="Hume D.A."/>
            <person name="Kai C."/>
            <person name="Sasaki D."/>
            <person name="Tomaru Y."/>
            <person name="Fukuda S."/>
            <person name="Kanamori-Katayama M."/>
            <person name="Suzuki M."/>
            <person name="Aoki J."/>
            <person name="Arakawa T."/>
            <person name="Iida J."/>
            <person name="Imamura K."/>
            <person name="Itoh M."/>
            <person name="Kato T."/>
            <person name="Kawaji H."/>
            <person name="Kawagashira N."/>
            <person name="Kawashima T."/>
            <person name="Kojima M."/>
            <person name="Kondo S."/>
            <person name="Konno H."/>
            <person name="Nakano K."/>
            <person name="Ninomiya N."/>
            <person name="Nishio T."/>
            <person name="Okada M."/>
            <person name="Plessy C."/>
            <person name="Shibata K."/>
            <person name="Shiraki T."/>
            <person name="Suzuki S."/>
            <person name="Tagami M."/>
            <person name="Waki K."/>
            <person name="Watahiki A."/>
            <person name="Okamura-Oho Y."/>
            <person name="Suzuki H."/>
            <person name="Kawai J."/>
            <person name="Hayashizaki Y."/>
        </authorList>
    </citation>
    <scope>NUCLEOTIDE SEQUENCE [LARGE SCALE MRNA]</scope>
    <source>
        <strain>C57BL/6J</strain>
        <strain>NOD</strain>
        <tissue>Hippocampus</tissue>
    </source>
</reference>
<reference key="5">
    <citation type="journal article" date="2004" name="Genome Res.">
        <title>The status, quality, and expansion of the NIH full-length cDNA project: the Mammalian Gene Collection (MGC).</title>
        <authorList>
            <consortium name="The MGC Project Team"/>
        </authorList>
    </citation>
    <scope>NUCLEOTIDE SEQUENCE [LARGE SCALE MRNA]</scope>
    <source>
        <strain>FVB/N</strain>
        <tissue>Mammary tumor</tissue>
    </source>
</reference>
<reference key="6">
    <citation type="journal article" date="2008" name="Proc. Natl. Acad. Sci. U.S.A.">
        <title>Remodeling of ryanodine receptor complex causes 'leaky' channels: a molecular mechanism for decreased exercise capacity.</title>
        <authorList>
            <person name="Bellinger A.M."/>
            <person name="Reiken S."/>
            <person name="Dura M."/>
            <person name="Murphy P.W."/>
            <person name="Deng S.X."/>
            <person name="Landry D.W."/>
            <person name="Nieman D."/>
            <person name="Lehnart S.E."/>
            <person name="Samaru M."/>
            <person name="LaCampagne A."/>
            <person name="Marks A.R."/>
        </authorList>
    </citation>
    <scope>IDENTIFICATION IN A COMPLEX WITH PDE4D; PKA; RYR1 AND PROTEIN PHOSPHATASE 1</scope>
</reference>
<reference key="7">
    <citation type="journal article" date="2010" name="Cell">
        <title>A tissue-specific atlas of mouse protein phosphorylation and expression.</title>
        <authorList>
            <person name="Huttlin E.L."/>
            <person name="Jedrychowski M.P."/>
            <person name="Elias J.E."/>
            <person name="Goswami T."/>
            <person name="Rad R."/>
            <person name="Beausoleil S.A."/>
            <person name="Villen J."/>
            <person name="Haas W."/>
            <person name="Sowa M.E."/>
            <person name="Gygi S.P."/>
        </authorList>
    </citation>
    <scope>IDENTIFICATION BY MASS SPECTROMETRY [LARGE SCALE ANALYSIS]</scope>
    <source>
        <tissue>Brain</tissue>
        <tissue>Brown adipose tissue</tissue>
        <tissue>Heart</tissue>
        <tissue>Kidney</tissue>
        <tissue>Liver</tissue>
        <tissue>Lung</tissue>
        <tissue>Pancreas</tissue>
        <tissue>Spleen</tissue>
        <tissue>Testis</tissue>
    </source>
</reference>
<reference key="8">
    <citation type="journal article" date="2013" name="Mol. Cell">
        <title>SIRT5-mediated lysine desuccinylation impacts diverse metabolic pathways.</title>
        <authorList>
            <person name="Park J."/>
            <person name="Chen Y."/>
            <person name="Tishkoff D.X."/>
            <person name="Peng C."/>
            <person name="Tan M."/>
            <person name="Dai L."/>
            <person name="Xie Z."/>
            <person name="Zhang Y."/>
            <person name="Zwaans B.M."/>
            <person name="Skinner M.E."/>
            <person name="Lombard D.B."/>
            <person name="Zhao Y."/>
        </authorList>
    </citation>
    <scope>ACETYLATION [LARGE SCALE ANALYSIS] AT LYS-53</scope>
    <scope>SUCCINYLATION [LARGE SCALE ANALYSIS] AT LYS-53</scope>
    <scope>IDENTIFICATION BY MASS SPECTROMETRY [LARGE SCALE ANALYSIS]</scope>
    <source>
        <tissue>Embryonic fibroblast</tissue>
    </source>
</reference>
<accession>P26883</accession>
<accession>Q545E9</accession>
<protein>
    <recommendedName>
        <fullName>Peptidyl-prolyl cis-trans isomerase FKBP1A</fullName>
        <shortName>PPIase FKBP1A</shortName>
        <ecNumber evidence="2">5.2.1.8</ecNumber>
    </recommendedName>
    <alternativeName>
        <fullName>12 kDa FK506-binding protein</fullName>
        <shortName>12 kDa FKBP</shortName>
        <shortName>FKBP-12</shortName>
    </alternativeName>
    <alternativeName>
        <fullName>Calstabin-1</fullName>
    </alternativeName>
    <alternativeName>
        <fullName>FK506-binding protein 1A</fullName>
        <shortName>FKBP-1A</shortName>
    </alternativeName>
    <alternativeName>
        <fullName>Immunophilin FKBP12</fullName>
    </alternativeName>
    <alternativeName>
        <fullName>Rotamase</fullName>
    </alternativeName>
</protein>
<sequence>MGVQVETISPGDGRTFPKRGQTCVVHYTGMLEDGKKFDSSRDRNKPFKFTLGKQEVIRGWEEGVAQMSVGQRAKLIISSDYAYGATGHPGIIPPHATLVFDVELLKLE</sequence>
<organism>
    <name type="scientific">Mus musculus</name>
    <name type="common">Mouse</name>
    <dbReference type="NCBI Taxonomy" id="10090"/>
    <lineage>
        <taxon>Eukaryota</taxon>
        <taxon>Metazoa</taxon>
        <taxon>Chordata</taxon>
        <taxon>Craniata</taxon>
        <taxon>Vertebrata</taxon>
        <taxon>Euteleostomi</taxon>
        <taxon>Mammalia</taxon>
        <taxon>Eutheria</taxon>
        <taxon>Euarchontoglires</taxon>
        <taxon>Glires</taxon>
        <taxon>Rodentia</taxon>
        <taxon>Myomorpha</taxon>
        <taxon>Muroidea</taxon>
        <taxon>Muridae</taxon>
        <taxon>Murinae</taxon>
        <taxon>Mus</taxon>
        <taxon>Mus</taxon>
    </lineage>
</organism>